<sequence>MPASLQEVKRRIESTKKTSQITSAMQMVSTAKLSQIQKHATSYQVYATKIRSVITHLSKSHLLDSVNTTSKNSDGKVNTLGMLRQRPVKTTGIVVITSDRGLVGSYNSNVIKETLELIENNHHSTEDVAIIAIGGTGADFFKKRGYNVAYEYRGISDIPTYKDARPLVEAIVSMYDKEVYDELFVCYSHFVNTLTSEFRAEKMLPVSAENMGHDDLTSNDEGYSIEYETEPSEDAILEVVLPQYAESLVYGAILDAKTSEHASSSTAMKSASDNAKDIISSLELQYNRARQSAITTEITEITGAQAALE</sequence>
<organism>
    <name type="scientific">Ligilactobacillus salivarius (strain UCC118)</name>
    <name type="common">Lactobacillus salivarius</name>
    <dbReference type="NCBI Taxonomy" id="362948"/>
    <lineage>
        <taxon>Bacteria</taxon>
        <taxon>Bacillati</taxon>
        <taxon>Bacillota</taxon>
        <taxon>Bacilli</taxon>
        <taxon>Lactobacillales</taxon>
        <taxon>Lactobacillaceae</taxon>
        <taxon>Ligilactobacillus</taxon>
    </lineage>
</organism>
<accession>Q1WUC7</accession>
<dbReference type="EMBL" id="CP000233">
    <property type="protein sequence ID" value="ABD99408.1"/>
    <property type="molecule type" value="Genomic_DNA"/>
</dbReference>
<dbReference type="RefSeq" id="WP_003699944.1">
    <property type="nucleotide sequence ID" value="NC_007929.1"/>
</dbReference>
<dbReference type="RefSeq" id="YP_535491.1">
    <property type="nucleotide sequence ID" value="NC_007929.1"/>
</dbReference>
<dbReference type="SMR" id="Q1WUC7"/>
<dbReference type="STRING" id="362948.LSL_0599"/>
<dbReference type="KEGG" id="lsl:LSL_0599"/>
<dbReference type="PATRIC" id="fig|362948.14.peg.678"/>
<dbReference type="HOGENOM" id="CLU_050669_0_1_9"/>
<dbReference type="OrthoDB" id="9812769at2"/>
<dbReference type="Proteomes" id="UP000006559">
    <property type="component" value="Chromosome"/>
</dbReference>
<dbReference type="GO" id="GO:0005886">
    <property type="term" value="C:plasma membrane"/>
    <property type="evidence" value="ECO:0007669"/>
    <property type="project" value="UniProtKB-SubCell"/>
</dbReference>
<dbReference type="GO" id="GO:0045259">
    <property type="term" value="C:proton-transporting ATP synthase complex"/>
    <property type="evidence" value="ECO:0007669"/>
    <property type="project" value="UniProtKB-KW"/>
</dbReference>
<dbReference type="GO" id="GO:0005524">
    <property type="term" value="F:ATP binding"/>
    <property type="evidence" value="ECO:0007669"/>
    <property type="project" value="UniProtKB-UniRule"/>
</dbReference>
<dbReference type="GO" id="GO:0046933">
    <property type="term" value="F:proton-transporting ATP synthase activity, rotational mechanism"/>
    <property type="evidence" value="ECO:0007669"/>
    <property type="project" value="UniProtKB-UniRule"/>
</dbReference>
<dbReference type="GO" id="GO:0042777">
    <property type="term" value="P:proton motive force-driven plasma membrane ATP synthesis"/>
    <property type="evidence" value="ECO:0007669"/>
    <property type="project" value="UniProtKB-UniRule"/>
</dbReference>
<dbReference type="CDD" id="cd12151">
    <property type="entry name" value="F1-ATPase_gamma"/>
    <property type="match status" value="1"/>
</dbReference>
<dbReference type="Gene3D" id="3.40.1380.10">
    <property type="match status" value="1"/>
</dbReference>
<dbReference type="Gene3D" id="1.10.287.80">
    <property type="entry name" value="ATP synthase, gamma subunit, helix hairpin domain"/>
    <property type="match status" value="2"/>
</dbReference>
<dbReference type="HAMAP" id="MF_00815">
    <property type="entry name" value="ATP_synth_gamma_bact"/>
    <property type="match status" value="1"/>
</dbReference>
<dbReference type="InterPro" id="IPR035968">
    <property type="entry name" value="ATP_synth_F1_ATPase_gsu"/>
</dbReference>
<dbReference type="InterPro" id="IPR000131">
    <property type="entry name" value="ATP_synth_F1_gsu"/>
</dbReference>
<dbReference type="NCBIfam" id="TIGR01146">
    <property type="entry name" value="ATPsyn_F1gamma"/>
    <property type="match status" value="1"/>
</dbReference>
<dbReference type="NCBIfam" id="NF004147">
    <property type="entry name" value="PRK05621.2-1"/>
    <property type="match status" value="1"/>
</dbReference>
<dbReference type="PANTHER" id="PTHR11693">
    <property type="entry name" value="ATP SYNTHASE GAMMA CHAIN"/>
    <property type="match status" value="1"/>
</dbReference>
<dbReference type="PANTHER" id="PTHR11693:SF22">
    <property type="entry name" value="ATP SYNTHASE SUBUNIT GAMMA, MITOCHONDRIAL"/>
    <property type="match status" value="1"/>
</dbReference>
<dbReference type="Pfam" id="PF00231">
    <property type="entry name" value="ATP-synt"/>
    <property type="match status" value="1"/>
</dbReference>
<dbReference type="PRINTS" id="PR00126">
    <property type="entry name" value="ATPASEGAMMA"/>
</dbReference>
<dbReference type="SUPFAM" id="SSF52943">
    <property type="entry name" value="ATP synthase (F1-ATPase), gamma subunit"/>
    <property type="match status" value="1"/>
</dbReference>
<feature type="chain" id="PRO_1000053239" description="ATP synthase gamma chain">
    <location>
        <begin position="1"/>
        <end position="309"/>
    </location>
</feature>
<gene>
    <name evidence="1" type="primary">atpG</name>
    <name type="ordered locus">LSL_0599</name>
</gene>
<keyword id="KW-0066">ATP synthesis</keyword>
<keyword id="KW-1003">Cell membrane</keyword>
<keyword id="KW-0139">CF(1)</keyword>
<keyword id="KW-0375">Hydrogen ion transport</keyword>
<keyword id="KW-0406">Ion transport</keyword>
<keyword id="KW-0472">Membrane</keyword>
<keyword id="KW-1185">Reference proteome</keyword>
<keyword id="KW-0813">Transport</keyword>
<proteinExistence type="inferred from homology"/>
<evidence type="ECO:0000255" key="1">
    <source>
        <dbReference type="HAMAP-Rule" id="MF_00815"/>
    </source>
</evidence>
<protein>
    <recommendedName>
        <fullName evidence="1">ATP synthase gamma chain</fullName>
    </recommendedName>
    <alternativeName>
        <fullName evidence="1">ATP synthase F1 sector gamma subunit</fullName>
    </alternativeName>
    <alternativeName>
        <fullName evidence="1">F-ATPase gamma subunit</fullName>
    </alternativeName>
</protein>
<reference key="1">
    <citation type="journal article" date="2006" name="Proc. Natl. Acad. Sci. U.S.A.">
        <title>Multireplicon genome architecture of Lactobacillus salivarius.</title>
        <authorList>
            <person name="Claesson M.J."/>
            <person name="Li Y."/>
            <person name="Leahy S."/>
            <person name="Canchaya C."/>
            <person name="van Pijkeren J.P."/>
            <person name="Cerdeno-Tarraga A.M."/>
            <person name="Parkhill J."/>
            <person name="Flynn S."/>
            <person name="O'Sullivan G.C."/>
            <person name="Collins J.K."/>
            <person name="Higgins D."/>
            <person name="Shanahan F."/>
            <person name="Fitzgerald G.F."/>
            <person name="van Sinderen D."/>
            <person name="O'Toole P.W."/>
        </authorList>
    </citation>
    <scope>NUCLEOTIDE SEQUENCE [LARGE SCALE GENOMIC DNA]</scope>
    <source>
        <strain>UCC118</strain>
    </source>
</reference>
<comment type="function">
    <text evidence="1">Produces ATP from ADP in the presence of a proton gradient across the membrane. The gamma chain is believed to be important in regulating ATPase activity and the flow of protons through the CF(0) complex.</text>
</comment>
<comment type="subunit">
    <text evidence="1">F-type ATPases have 2 components, CF(1) - the catalytic core - and CF(0) - the membrane proton channel. CF(1) has five subunits: alpha(3), beta(3), gamma(1), delta(1), epsilon(1). CF(0) has three main subunits: a, b and c.</text>
</comment>
<comment type="subcellular location">
    <subcellularLocation>
        <location evidence="1">Cell membrane</location>
        <topology evidence="1">Peripheral membrane protein</topology>
    </subcellularLocation>
</comment>
<comment type="similarity">
    <text evidence="1">Belongs to the ATPase gamma chain family.</text>
</comment>
<name>ATPG_LIGS1</name>